<proteinExistence type="inferred from homology"/>
<protein>
    <recommendedName>
        <fullName evidence="1">D-alanyl carrier protein</fullName>
        <shortName evidence="1">DCP</shortName>
    </recommendedName>
    <alternativeName>
        <fullName evidence="1">D-alanine--poly(phosphoribitol) ligase subunit 2</fullName>
    </alternativeName>
</protein>
<accession>A7ZA76</accession>
<comment type="function">
    <text evidence="1">Carrier protein involved in the D-alanylation of lipoteichoic acid (LTA). The loading of thioester-linked D-alanine onto DltC is catalyzed by D-alanine--D-alanyl carrier protein ligase DltA. The DltC-carried D-alanyl group is further transferred to cell membrane phosphatidylglycerol (PG) by forming an ester bond, probably catalyzed by DltD. D-alanylation of LTA plays an important role in modulating the properties of the cell wall in Gram-positive bacteria, influencing the net charge of the cell wall.</text>
</comment>
<comment type="pathway">
    <text evidence="1">Cell wall biogenesis; lipoteichoic acid biosynthesis.</text>
</comment>
<comment type="subcellular location">
    <subcellularLocation>
        <location evidence="1">Cytoplasm</location>
    </subcellularLocation>
</comment>
<comment type="PTM">
    <text evidence="1">4'-phosphopantetheine is transferred from CoA to a specific serine of apo-DCP.</text>
</comment>
<comment type="similarity">
    <text evidence="1">Belongs to the DltC family.</text>
</comment>
<sequence>MEFKQEVLDVLAEVCQEDAVKENPDIEIFEEGLLDSFGTVELLVAIENRFGITVPITEFDRDEWNTPNNIVNKLTELK</sequence>
<gene>
    <name evidence="1" type="primary">dltC</name>
    <name type="ordered locus">RBAM_035730</name>
</gene>
<evidence type="ECO:0000255" key="1">
    <source>
        <dbReference type="HAMAP-Rule" id="MF_00565"/>
    </source>
</evidence>
<organism>
    <name type="scientific">Bacillus velezensis (strain DSM 23117 / BGSC 10A6 / LMG 26770 / FZB42)</name>
    <name type="common">Bacillus amyloliquefaciens subsp. plantarum</name>
    <dbReference type="NCBI Taxonomy" id="326423"/>
    <lineage>
        <taxon>Bacteria</taxon>
        <taxon>Bacillati</taxon>
        <taxon>Bacillota</taxon>
        <taxon>Bacilli</taxon>
        <taxon>Bacillales</taxon>
        <taxon>Bacillaceae</taxon>
        <taxon>Bacillus</taxon>
        <taxon>Bacillus amyloliquefaciens group</taxon>
    </lineage>
</organism>
<feature type="chain" id="PRO_1000024911" description="D-alanyl carrier protein">
    <location>
        <begin position="1"/>
        <end position="78"/>
    </location>
</feature>
<feature type="domain" description="Carrier" evidence="1">
    <location>
        <begin position="1"/>
        <end position="78"/>
    </location>
</feature>
<feature type="modified residue" description="O-(pantetheine 4'-phosphoryl)serine" evidence="1">
    <location>
        <position position="36"/>
    </location>
</feature>
<keyword id="KW-0961">Cell wall biogenesis/degradation</keyword>
<keyword id="KW-0963">Cytoplasm</keyword>
<keyword id="KW-0596">Phosphopantetheine</keyword>
<keyword id="KW-0597">Phosphoprotein</keyword>
<reference key="1">
    <citation type="journal article" date="2007" name="Nat. Biotechnol.">
        <title>Comparative analysis of the complete genome sequence of the plant growth-promoting bacterium Bacillus amyloliquefaciens FZB42.</title>
        <authorList>
            <person name="Chen X.H."/>
            <person name="Koumoutsi A."/>
            <person name="Scholz R."/>
            <person name="Eisenreich A."/>
            <person name="Schneider K."/>
            <person name="Heinemeyer I."/>
            <person name="Morgenstern B."/>
            <person name="Voss B."/>
            <person name="Hess W.R."/>
            <person name="Reva O."/>
            <person name="Junge H."/>
            <person name="Voigt B."/>
            <person name="Jungblut P.R."/>
            <person name="Vater J."/>
            <person name="Suessmuth R."/>
            <person name="Liesegang H."/>
            <person name="Strittmatter A."/>
            <person name="Gottschalk G."/>
            <person name="Borriss R."/>
        </authorList>
    </citation>
    <scope>NUCLEOTIDE SEQUENCE [LARGE SCALE GENOMIC DNA]</scope>
    <source>
        <strain>DSM 23117 / BGSC 10A6 / LMG 26770 / FZB42</strain>
    </source>
</reference>
<dbReference type="EMBL" id="CP000560">
    <property type="protein sequence ID" value="ABS75902.1"/>
    <property type="molecule type" value="Genomic_DNA"/>
</dbReference>
<dbReference type="RefSeq" id="WP_003150875.1">
    <property type="nucleotide sequence ID" value="NC_009725.2"/>
</dbReference>
<dbReference type="SMR" id="A7ZA76"/>
<dbReference type="GeneID" id="93082715"/>
<dbReference type="KEGG" id="bay:RBAM_035730"/>
<dbReference type="HOGENOM" id="CLU_108696_19_0_9"/>
<dbReference type="UniPathway" id="UPA00556"/>
<dbReference type="Proteomes" id="UP000001120">
    <property type="component" value="Chromosome"/>
</dbReference>
<dbReference type="GO" id="GO:0005737">
    <property type="term" value="C:cytoplasm"/>
    <property type="evidence" value="ECO:0007669"/>
    <property type="project" value="UniProtKB-SubCell"/>
</dbReference>
<dbReference type="GO" id="GO:0036370">
    <property type="term" value="F:D-alanyl carrier activity"/>
    <property type="evidence" value="ECO:0007669"/>
    <property type="project" value="UniProtKB-UniRule"/>
</dbReference>
<dbReference type="GO" id="GO:0071555">
    <property type="term" value="P:cell wall organization"/>
    <property type="evidence" value="ECO:0007669"/>
    <property type="project" value="UniProtKB-KW"/>
</dbReference>
<dbReference type="GO" id="GO:0070395">
    <property type="term" value="P:lipoteichoic acid biosynthetic process"/>
    <property type="evidence" value="ECO:0007669"/>
    <property type="project" value="UniProtKB-UniRule"/>
</dbReference>
<dbReference type="Gene3D" id="1.10.1200.10">
    <property type="entry name" value="ACP-like"/>
    <property type="match status" value="1"/>
</dbReference>
<dbReference type="HAMAP" id="MF_00565">
    <property type="entry name" value="DltC"/>
    <property type="match status" value="1"/>
</dbReference>
<dbReference type="InterPro" id="IPR036736">
    <property type="entry name" value="ACP-like_sf"/>
</dbReference>
<dbReference type="InterPro" id="IPR003230">
    <property type="entry name" value="DltC"/>
</dbReference>
<dbReference type="InterPro" id="IPR009081">
    <property type="entry name" value="PP-bd_ACP"/>
</dbReference>
<dbReference type="NCBIfam" id="TIGR01688">
    <property type="entry name" value="dltC"/>
    <property type="match status" value="1"/>
</dbReference>
<dbReference type="NCBIfam" id="NF003464">
    <property type="entry name" value="PRK05087.1"/>
    <property type="match status" value="1"/>
</dbReference>
<dbReference type="Pfam" id="PF00550">
    <property type="entry name" value="PP-binding"/>
    <property type="match status" value="1"/>
</dbReference>
<dbReference type="SUPFAM" id="SSF47336">
    <property type="entry name" value="ACP-like"/>
    <property type="match status" value="1"/>
</dbReference>
<dbReference type="PROSITE" id="PS50075">
    <property type="entry name" value="CARRIER"/>
    <property type="match status" value="1"/>
</dbReference>
<name>DLTC_BACVZ</name>